<reference key="1">
    <citation type="journal article" date="1991" name="Gene">
        <title>Homology between proteins controlling Streptomyces fradiae tylosin resistance and ATP-binding transport.</title>
        <authorList>
            <person name="Rosteck P.R. Jr."/>
            <person name="Reynolds P.A."/>
            <person name="Hershberger C.L."/>
        </authorList>
    </citation>
    <scope>NUCLEOTIDE SEQUENCE [GENOMIC DNA]</scope>
</reference>
<keyword id="KW-0046">Antibiotic resistance</keyword>
<keyword id="KW-0067">ATP-binding</keyword>
<keyword id="KW-1003">Cell membrane</keyword>
<keyword id="KW-0472">Membrane</keyword>
<keyword id="KW-0547">Nucleotide-binding</keyword>
<keyword id="KW-0677">Repeat</keyword>
<keyword id="KW-0813">Transport</keyword>
<sequence length="548" mass="59130">MRTSPSSQLSLHGVTKRYDDRVVLSQVSLAISPGEKAGIIGDNGAGKSTLLRLLAGEERPDAGEVTVIAPGGVGYLPQTLGLPPRATVQDAIDLAMTELRVLEAELRRTEAALAEAATDEALQDALTAYARLTEQYEVRDGYGADARVDAALHGLGLPGLPRDRRLGTLSGGERSRLALAATLASQPELLLLDEPTNDLDDRAVHWLEEHLSGHRGTVVTVTHDRVFLDRLTATVLEVDGRGVSRHGDGYAGYLAAKAAERRRRQQQYDEWRAELDRNRRLAEANVARLDGIPRKMGKAAFGHGAFRARGRDHGAMSRVRNAKERVERLTANPVAPPADRLSLTARIATADGPGEAPAAELDGVVVGSRLRVPKLRLGAAERLLITGPNGAGKSTLLSVLAGELSPDAGAVSVPGRVGHLRQEETPWPAKLTVLEAFAHNRPGDRDEQADRRLSLGLFEPEALRLRVGELSYGQRRRIELARLVSEPVGLLLLDEPTNHLSPALVEELEEALTGYGGALVLVTHDRRMRSRFTGSHLELREGVVSGAR</sequence>
<gene>
    <name type="primary">tlrC</name>
</gene>
<feature type="chain" id="PRO_0000093024" description="Tylosin resistance ATP-binding protein TlrC">
    <location>
        <begin position="1"/>
        <end position="548"/>
    </location>
</feature>
<feature type="domain" description="ABC transporter 1" evidence="2">
    <location>
        <begin position="9"/>
        <end position="265"/>
    </location>
</feature>
<feature type="domain" description="ABC transporter 2" evidence="2">
    <location>
        <begin position="347"/>
        <end position="547"/>
    </location>
</feature>
<feature type="binding site" evidence="2">
    <location>
        <begin position="41"/>
        <end position="48"/>
    </location>
    <ligand>
        <name>ATP</name>
        <dbReference type="ChEBI" id="CHEBI:30616"/>
        <label>1</label>
    </ligand>
</feature>
<feature type="binding site" evidence="2">
    <location>
        <begin position="387"/>
        <end position="394"/>
    </location>
    <ligand>
        <name>ATP</name>
        <dbReference type="ChEBI" id="CHEBI:30616"/>
        <label>2</label>
    </ligand>
</feature>
<evidence type="ECO:0000250" key="1"/>
<evidence type="ECO:0000255" key="2">
    <source>
        <dbReference type="PROSITE-ProRule" id="PRU00434"/>
    </source>
</evidence>
<evidence type="ECO:0000305" key="3"/>
<organism>
    <name type="scientific">Streptomyces fradiae</name>
    <name type="common">Streptomyces roseoflavus</name>
    <dbReference type="NCBI Taxonomy" id="1906"/>
    <lineage>
        <taxon>Bacteria</taxon>
        <taxon>Bacillati</taxon>
        <taxon>Actinomycetota</taxon>
        <taxon>Actinomycetes</taxon>
        <taxon>Kitasatosporales</taxon>
        <taxon>Streptomycetaceae</taxon>
        <taxon>Streptomyces</taxon>
    </lineage>
</organism>
<comment type="function">
    <text>Responsible for tylosin resistance, and is proposed to be a subunit of a multicomponent export system for the energy-dependent efflux of tylosin.</text>
</comment>
<comment type="subcellular location">
    <subcellularLocation>
        <location evidence="1">Cell membrane</location>
        <topology evidence="1">Peripheral membrane protein</topology>
    </subcellularLocation>
</comment>
<comment type="similarity">
    <text evidence="3">Belongs to the ABC transporter superfamily.</text>
</comment>
<proteinExistence type="inferred from homology"/>
<accession>P25256</accession>
<dbReference type="EMBL" id="M57437">
    <property type="protein sequence ID" value="AAA26832.1"/>
    <property type="molecule type" value="Genomic_DNA"/>
</dbReference>
<dbReference type="PIR" id="JQ1142">
    <property type="entry name" value="JQ1142"/>
</dbReference>
<dbReference type="RefSeq" id="WP_063856491.1">
    <property type="nucleotide sequence ID" value="NG_048321.1"/>
</dbReference>
<dbReference type="SMR" id="P25256"/>
<dbReference type="STRING" id="1906.SFRA_29725"/>
<dbReference type="CARD" id="ARO:3002827">
    <property type="molecule name" value="tlrC"/>
    <property type="mechanism identifier" value="ARO:0001003"/>
    <property type="mechanism name" value="antibiotic target protection"/>
</dbReference>
<dbReference type="TCDB" id="3.A.1.120.2">
    <property type="family name" value="the atp-binding cassette (abc) superfamily"/>
</dbReference>
<dbReference type="KEGG" id="ag:AAA26832"/>
<dbReference type="eggNOG" id="COG0488">
    <property type="taxonomic scope" value="Bacteria"/>
</dbReference>
<dbReference type="GO" id="GO:0005886">
    <property type="term" value="C:plasma membrane"/>
    <property type="evidence" value="ECO:0007669"/>
    <property type="project" value="UniProtKB-SubCell"/>
</dbReference>
<dbReference type="GO" id="GO:0005524">
    <property type="term" value="F:ATP binding"/>
    <property type="evidence" value="ECO:0007669"/>
    <property type="project" value="UniProtKB-KW"/>
</dbReference>
<dbReference type="GO" id="GO:0016887">
    <property type="term" value="F:ATP hydrolysis activity"/>
    <property type="evidence" value="ECO:0007669"/>
    <property type="project" value="InterPro"/>
</dbReference>
<dbReference type="GO" id="GO:0046677">
    <property type="term" value="P:response to antibiotic"/>
    <property type="evidence" value="ECO:0007669"/>
    <property type="project" value="UniProtKB-KW"/>
</dbReference>
<dbReference type="CDD" id="cd03221">
    <property type="entry name" value="ABCF_EF-3"/>
    <property type="match status" value="1"/>
</dbReference>
<dbReference type="FunFam" id="3.40.50.300:FF:000011">
    <property type="entry name" value="Putative ABC transporter ATP-binding component"/>
    <property type="match status" value="1"/>
</dbReference>
<dbReference type="Gene3D" id="3.40.50.300">
    <property type="entry name" value="P-loop containing nucleotide triphosphate hydrolases"/>
    <property type="match status" value="2"/>
</dbReference>
<dbReference type="InterPro" id="IPR003593">
    <property type="entry name" value="AAA+_ATPase"/>
</dbReference>
<dbReference type="InterPro" id="IPR003439">
    <property type="entry name" value="ABC_transporter-like_ATP-bd"/>
</dbReference>
<dbReference type="InterPro" id="IPR017871">
    <property type="entry name" value="ABC_transporter-like_CS"/>
</dbReference>
<dbReference type="InterPro" id="IPR051309">
    <property type="entry name" value="ABCF_ATPase"/>
</dbReference>
<dbReference type="InterPro" id="IPR027417">
    <property type="entry name" value="P-loop_NTPase"/>
</dbReference>
<dbReference type="NCBIfam" id="NF000171">
    <property type="entry name" value="ABCF_producer"/>
    <property type="match status" value="1"/>
</dbReference>
<dbReference type="NCBIfam" id="NF000355">
    <property type="entry name" value="ribo_prot_ABC_F"/>
    <property type="match status" value="1"/>
</dbReference>
<dbReference type="PANTHER" id="PTHR42855">
    <property type="entry name" value="ABC TRANSPORTER ATP-BINDING SUBUNIT"/>
    <property type="match status" value="1"/>
</dbReference>
<dbReference type="PANTHER" id="PTHR42855:SF2">
    <property type="entry name" value="DRUG RESISTANCE ABC TRANSPORTER,ATP-BINDING PROTEIN"/>
    <property type="match status" value="1"/>
</dbReference>
<dbReference type="Pfam" id="PF00005">
    <property type="entry name" value="ABC_tran"/>
    <property type="match status" value="2"/>
</dbReference>
<dbReference type="SMART" id="SM00382">
    <property type="entry name" value="AAA"/>
    <property type="match status" value="2"/>
</dbReference>
<dbReference type="SUPFAM" id="SSF52540">
    <property type="entry name" value="P-loop containing nucleoside triphosphate hydrolases"/>
    <property type="match status" value="2"/>
</dbReference>
<dbReference type="PROSITE" id="PS00211">
    <property type="entry name" value="ABC_TRANSPORTER_1"/>
    <property type="match status" value="2"/>
</dbReference>
<dbReference type="PROSITE" id="PS50893">
    <property type="entry name" value="ABC_TRANSPORTER_2"/>
    <property type="match status" value="2"/>
</dbReference>
<name>TLRC_STRFR</name>
<protein>
    <recommendedName>
        <fullName>Tylosin resistance ATP-binding protein TlrC</fullName>
    </recommendedName>
</protein>